<comment type="function">
    <text evidence="1">Catalyzes amidations at positions B, D, E, and G on adenosylcobyrinic A,C-diamide. NH(2) groups are provided by glutamine, and one molecule of ATP is hydrogenolyzed for each amidation.</text>
</comment>
<comment type="pathway">
    <text evidence="1">Cofactor biosynthesis; adenosylcobalamin biosynthesis.</text>
</comment>
<comment type="similarity">
    <text evidence="1">Belongs to the CobB/CobQ family. CobQ subfamily.</text>
</comment>
<accession>B1WYU3</accession>
<reference key="1">
    <citation type="journal article" date="2008" name="Proc. Natl. Acad. Sci. U.S.A.">
        <title>The genome of Cyanothece 51142, a unicellular diazotrophic cyanobacterium important in the marine nitrogen cycle.</title>
        <authorList>
            <person name="Welsh E.A."/>
            <person name="Liberton M."/>
            <person name="Stoeckel J."/>
            <person name="Loh T."/>
            <person name="Elvitigala T."/>
            <person name="Wang C."/>
            <person name="Wollam A."/>
            <person name="Fulton R.S."/>
            <person name="Clifton S.W."/>
            <person name="Jacobs J.M."/>
            <person name="Aurora R."/>
            <person name="Ghosh B.K."/>
            <person name="Sherman L.A."/>
            <person name="Smith R.D."/>
            <person name="Wilson R.K."/>
            <person name="Pakrasi H.B."/>
        </authorList>
    </citation>
    <scope>NUCLEOTIDE SEQUENCE [LARGE SCALE GENOMIC DNA]</scope>
    <source>
        <strain>ATCC 51142 / BH68</strain>
    </source>
</reference>
<name>COBQ_CROS5</name>
<proteinExistence type="inferred from homology"/>
<feature type="chain" id="PRO_1000090227" description="Cobyric acid synthase">
    <location>
        <begin position="1"/>
        <end position="494"/>
    </location>
</feature>
<feature type="domain" description="GATase cobBQ-type" evidence="1">
    <location>
        <begin position="249"/>
        <end position="443"/>
    </location>
</feature>
<feature type="active site" description="Nucleophile" evidence="1">
    <location>
        <position position="330"/>
    </location>
</feature>
<feature type="active site" evidence="1">
    <location>
        <position position="435"/>
    </location>
</feature>
<gene>
    <name evidence="1" type="primary">cobQ</name>
    <name type="ordered locus">cce_3359</name>
</gene>
<evidence type="ECO:0000255" key="1">
    <source>
        <dbReference type="HAMAP-Rule" id="MF_00028"/>
    </source>
</evidence>
<keyword id="KW-0169">Cobalamin biosynthesis</keyword>
<keyword id="KW-0315">Glutamine amidotransferase</keyword>
<keyword id="KW-1185">Reference proteome</keyword>
<sequence length="494" mass="54892">MKAMMVVGTTSHAGKSFITTAICRILARRGWHITPFKGQNMALNAYVTTTGGEIGYAQAVQAWAAGINPRVEMNPILLKPQGNMTSQVILGGKAAGITTATNYYEQYFDKGWNMIVHSLERLAVEYDFVVCEGAGSPAEINLKHRDLTNMRVAKYLNAPTLLVVDIDRGGAFAHVVGTLQLLDESERALIKGIVINKFRGQRSLLDSGIEWLENYTGIPVLGVIPWREISFSAEDSLDLLERRRKEQKEINVTILRLPHIANFTDFEPLDAEKTVSISYLDLNEPLGYPDAVIIPGSKTTINDLIALHESGIAKQLQDYVAAGGIVLGICGGFQMLGEMVFDPDQLEGNNVSYAGLNLLPIETVITPEKIVRQRHTCSVYPYPGFPITGYEIHQGVTRSSKSPHQRIKTTNHPLFEDGSLGIVNDNQSVWGCYLHGIFDNGAWRRNWLNYLRNRRGLPSLPTGIANYREQRETVLNQLADLVEQYIDLTPLLNN</sequence>
<dbReference type="EMBL" id="CP000806">
    <property type="protein sequence ID" value="ACB52707.1"/>
    <property type="molecule type" value="Genomic_DNA"/>
</dbReference>
<dbReference type="RefSeq" id="WP_009545468.1">
    <property type="nucleotide sequence ID" value="NC_010546.1"/>
</dbReference>
<dbReference type="STRING" id="43989.cce_3359"/>
<dbReference type="KEGG" id="cyt:cce_3359"/>
<dbReference type="eggNOG" id="COG1492">
    <property type="taxonomic scope" value="Bacteria"/>
</dbReference>
<dbReference type="HOGENOM" id="CLU_019250_2_2_3"/>
<dbReference type="OrthoDB" id="9808302at2"/>
<dbReference type="UniPathway" id="UPA00148"/>
<dbReference type="Proteomes" id="UP000001203">
    <property type="component" value="Chromosome circular"/>
</dbReference>
<dbReference type="GO" id="GO:0015420">
    <property type="term" value="F:ABC-type vitamin B12 transporter activity"/>
    <property type="evidence" value="ECO:0007669"/>
    <property type="project" value="UniProtKB-UniRule"/>
</dbReference>
<dbReference type="GO" id="GO:0003824">
    <property type="term" value="F:catalytic activity"/>
    <property type="evidence" value="ECO:0007669"/>
    <property type="project" value="InterPro"/>
</dbReference>
<dbReference type="GO" id="GO:0009236">
    <property type="term" value="P:cobalamin biosynthetic process"/>
    <property type="evidence" value="ECO:0007669"/>
    <property type="project" value="UniProtKB-UniRule"/>
</dbReference>
<dbReference type="CDD" id="cd05389">
    <property type="entry name" value="CobQ_N"/>
    <property type="match status" value="1"/>
</dbReference>
<dbReference type="CDD" id="cd01750">
    <property type="entry name" value="GATase1_CobQ"/>
    <property type="match status" value="1"/>
</dbReference>
<dbReference type="Gene3D" id="3.40.50.880">
    <property type="match status" value="1"/>
</dbReference>
<dbReference type="Gene3D" id="3.40.50.300">
    <property type="entry name" value="P-loop containing nucleotide triphosphate hydrolases"/>
    <property type="match status" value="1"/>
</dbReference>
<dbReference type="HAMAP" id="MF_00028">
    <property type="entry name" value="CobQ"/>
    <property type="match status" value="1"/>
</dbReference>
<dbReference type="InterPro" id="IPR029062">
    <property type="entry name" value="Class_I_gatase-like"/>
</dbReference>
<dbReference type="InterPro" id="IPR002586">
    <property type="entry name" value="CobQ/CobB/MinD/ParA_Nub-bd_dom"/>
</dbReference>
<dbReference type="InterPro" id="IPR033949">
    <property type="entry name" value="CobQ_GATase1"/>
</dbReference>
<dbReference type="InterPro" id="IPR047045">
    <property type="entry name" value="CobQ_N"/>
</dbReference>
<dbReference type="InterPro" id="IPR004459">
    <property type="entry name" value="CobQ_synth"/>
</dbReference>
<dbReference type="InterPro" id="IPR011698">
    <property type="entry name" value="GATase_3"/>
</dbReference>
<dbReference type="InterPro" id="IPR027417">
    <property type="entry name" value="P-loop_NTPase"/>
</dbReference>
<dbReference type="NCBIfam" id="TIGR00313">
    <property type="entry name" value="cobQ"/>
    <property type="match status" value="1"/>
</dbReference>
<dbReference type="NCBIfam" id="NF001989">
    <property type="entry name" value="PRK00784.1"/>
    <property type="match status" value="1"/>
</dbReference>
<dbReference type="PANTHER" id="PTHR21343:SF1">
    <property type="entry name" value="COBYRIC ACID SYNTHASE"/>
    <property type="match status" value="1"/>
</dbReference>
<dbReference type="PANTHER" id="PTHR21343">
    <property type="entry name" value="DETHIOBIOTIN SYNTHETASE"/>
    <property type="match status" value="1"/>
</dbReference>
<dbReference type="Pfam" id="PF01656">
    <property type="entry name" value="CbiA"/>
    <property type="match status" value="1"/>
</dbReference>
<dbReference type="Pfam" id="PF07685">
    <property type="entry name" value="GATase_3"/>
    <property type="match status" value="1"/>
</dbReference>
<dbReference type="SUPFAM" id="SSF52317">
    <property type="entry name" value="Class I glutamine amidotransferase-like"/>
    <property type="match status" value="1"/>
</dbReference>
<dbReference type="SUPFAM" id="SSF52540">
    <property type="entry name" value="P-loop containing nucleoside triphosphate hydrolases"/>
    <property type="match status" value="1"/>
</dbReference>
<dbReference type="PROSITE" id="PS51274">
    <property type="entry name" value="GATASE_COBBQ"/>
    <property type="match status" value="1"/>
</dbReference>
<protein>
    <recommendedName>
        <fullName evidence="1">Cobyric acid synthase</fullName>
    </recommendedName>
</protein>
<organism>
    <name type="scientific">Crocosphaera subtropica (strain ATCC 51142 / BH68)</name>
    <name type="common">Cyanothece sp. (strain ATCC 51142)</name>
    <dbReference type="NCBI Taxonomy" id="43989"/>
    <lineage>
        <taxon>Bacteria</taxon>
        <taxon>Bacillati</taxon>
        <taxon>Cyanobacteriota</taxon>
        <taxon>Cyanophyceae</taxon>
        <taxon>Oscillatoriophycideae</taxon>
        <taxon>Chroococcales</taxon>
        <taxon>Aphanothecaceae</taxon>
        <taxon>Crocosphaera</taxon>
        <taxon>Crocosphaera subtropica</taxon>
    </lineage>
</organism>